<organismHost>
    <name type="scientific">Escherichia coli</name>
    <dbReference type="NCBI Taxonomy" id="562"/>
</organismHost>
<sequence length="50" mass="5935">MSHNLEKVIEHNVAQERESFKEFVEKIFEENYTDQFTNQASDDIITKSTN</sequence>
<reference key="1">
    <citation type="journal article" date="2003" name="Microbiol. Mol. Biol. Rev.">
        <title>Bacteriophage T4 genome.</title>
        <authorList>
            <person name="Miller E.S."/>
            <person name="Kutter E."/>
            <person name="Mosig G."/>
            <person name="Arisaka F."/>
            <person name="Kunisawa T."/>
            <person name="Ruger W."/>
        </authorList>
    </citation>
    <scope>NUCLEOTIDE SEQUENCE [LARGE SCALE GENOMIC DNA]</scope>
</reference>
<keyword id="KW-1185">Reference proteome</keyword>
<feature type="chain" id="PRO_0000165200" description="Uncharacterized 5.9 kDa protein in asiA-arn intergenic region">
    <location>
        <begin position="1"/>
        <end position="50"/>
    </location>
</feature>
<gene>
    <name type="primary">y16A</name>
    <name type="synonym">asiA.1A</name>
</gene>
<proteinExistence type="predicted"/>
<dbReference type="EMBL" id="AF158101">
    <property type="protein sequence ID" value="AAD42540.1"/>
    <property type="molecule type" value="Genomic_DNA"/>
</dbReference>
<dbReference type="SMR" id="Q9T0T0"/>
<dbReference type="KEGG" id="vg:1258666"/>
<dbReference type="OrthoDB" id="26798at10239"/>
<dbReference type="Proteomes" id="UP000009087">
    <property type="component" value="Segment"/>
</dbReference>
<name>Y16A_BPT4</name>
<accession>Q9T0T0</accession>
<protein>
    <recommendedName>
        <fullName>Uncharacterized 5.9 kDa protein in asiA-arn intergenic region</fullName>
    </recommendedName>
</protein>
<organism>
    <name type="scientific">Enterobacteria phage T4</name>
    <name type="common">Bacteriophage T4</name>
    <dbReference type="NCBI Taxonomy" id="10665"/>
    <lineage>
        <taxon>Viruses</taxon>
        <taxon>Duplodnaviria</taxon>
        <taxon>Heunggongvirae</taxon>
        <taxon>Uroviricota</taxon>
        <taxon>Caudoviricetes</taxon>
        <taxon>Straboviridae</taxon>
        <taxon>Tevenvirinae</taxon>
        <taxon>Tequatrovirus</taxon>
    </lineage>
</organism>